<evidence type="ECO:0000255" key="1">
    <source>
        <dbReference type="HAMAP-Rule" id="MF_00374"/>
    </source>
</evidence>
<evidence type="ECO:0000305" key="2"/>
<name>RL29_ACAM1</name>
<dbReference type="EMBL" id="CP000828">
    <property type="protein sequence ID" value="ABW29676.1"/>
    <property type="molecule type" value="Genomic_DNA"/>
</dbReference>
<dbReference type="RefSeq" id="WP_012164968.1">
    <property type="nucleotide sequence ID" value="NC_009925.1"/>
</dbReference>
<dbReference type="SMR" id="B0C1E1"/>
<dbReference type="STRING" id="329726.AM1_4704"/>
<dbReference type="KEGG" id="amr:AM1_4704"/>
<dbReference type="eggNOG" id="COG0255">
    <property type="taxonomic scope" value="Bacteria"/>
</dbReference>
<dbReference type="HOGENOM" id="CLU_158491_0_0_3"/>
<dbReference type="OrthoDB" id="9815192at2"/>
<dbReference type="Proteomes" id="UP000000268">
    <property type="component" value="Chromosome"/>
</dbReference>
<dbReference type="GO" id="GO:0022625">
    <property type="term" value="C:cytosolic large ribosomal subunit"/>
    <property type="evidence" value="ECO:0007669"/>
    <property type="project" value="TreeGrafter"/>
</dbReference>
<dbReference type="GO" id="GO:0003735">
    <property type="term" value="F:structural constituent of ribosome"/>
    <property type="evidence" value="ECO:0007669"/>
    <property type="project" value="InterPro"/>
</dbReference>
<dbReference type="GO" id="GO:0006412">
    <property type="term" value="P:translation"/>
    <property type="evidence" value="ECO:0007669"/>
    <property type="project" value="UniProtKB-UniRule"/>
</dbReference>
<dbReference type="CDD" id="cd00427">
    <property type="entry name" value="Ribosomal_L29_HIP"/>
    <property type="match status" value="1"/>
</dbReference>
<dbReference type="FunFam" id="1.10.287.310:FF:000001">
    <property type="entry name" value="50S ribosomal protein L29"/>
    <property type="match status" value="1"/>
</dbReference>
<dbReference type="Gene3D" id="1.10.287.310">
    <property type="match status" value="1"/>
</dbReference>
<dbReference type="HAMAP" id="MF_00374">
    <property type="entry name" value="Ribosomal_uL29"/>
    <property type="match status" value="1"/>
</dbReference>
<dbReference type="InterPro" id="IPR050063">
    <property type="entry name" value="Ribosomal_protein_uL29"/>
</dbReference>
<dbReference type="InterPro" id="IPR001854">
    <property type="entry name" value="Ribosomal_uL29"/>
</dbReference>
<dbReference type="InterPro" id="IPR018254">
    <property type="entry name" value="Ribosomal_uL29_CS"/>
</dbReference>
<dbReference type="InterPro" id="IPR036049">
    <property type="entry name" value="Ribosomal_uL29_sf"/>
</dbReference>
<dbReference type="NCBIfam" id="TIGR00012">
    <property type="entry name" value="L29"/>
    <property type="match status" value="1"/>
</dbReference>
<dbReference type="PANTHER" id="PTHR10916">
    <property type="entry name" value="60S RIBOSOMAL PROTEIN L35/50S RIBOSOMAL PROTEIN L29"/>
    <property type="match status" value="1"/>
</dbReference>
<dbReference type="PANTHER" id="PTHR10916:SF0">
    <property type="entry name" value="LARGE RIBOSOMAL SUBUNIT PROTEIN UL29C"/>
    <property type="match status" value="1"/>
</dbReference>
<dbReference type="Pfam" id="PF00831">
    <property type="entry name" value="Ribosomal_L29"/>
    <property type="match status" value="1"/>
</dbReference>
<dbReference type="SUPFAM" id="SSF46561">
    <property type="entry name" value="Ribosomal protein L29 (L29p)"/>
    <property type="match status" value="1"/>
</dbReference>
<dbReference type="PROSITE" id="PS00579">
    <property type="entry name" value="RIBOSOMAL_L29"/>
    <property type="match status" value="1"/>
</dbReference>
<sequence>MALSKMADLKNLSVDEIDAKVQELKKELFDLRFQKATKETIQPHRFKHIRHEIAQLLTLKQQQS</sequence>
<proteinExistence type="inferred from homology"/>
<keyword id="KW-1185">Reference proteome</keyword>
<keyword id="KW-0687">Ribonucleoprotein</keyword>
<keyword id="KW-0689">Ribosomal protein</keyword>
<organism>
    <name type="scientific">Acaryochloris marina (strain MBIC 11017)</name>
    <dbReference type="NCBI Taxonomy" id="329726"/>
    <lineage>
        <taxon>Bacteria</taxon>
        <taxon>Bacillati</taxon>
        <taxon>Cyanobacteriota</taxon>
        <taxon>Cyanophyceae</taxon>
        <taxon>Acaryochloridales</taxon>
        <taxon>Acaryochloridaceae</taxon>
        <taxon>Acaryochloris</taxon>
    </lineage>
</organism>
<accession>B0C1E1</accession>
<reference key="1">
    <citation type="journal article" date="2008" name="Proc. Natl. Acad. Sci. U.S.A.">
        <title>Niche adaptation and genome expansion in the chlorophyll d-producing cyanobacterium Acaryochloris marina.</title>
        <authorList>
            <person name="Swingley W.D."/>
            <person name="Chen M."/>
            <person name="Cheung P.C."/>
            <person name="Conrad A.L."/>
            <person name="Dejesa L.C."/>
            <person name="Hao J."/>
            <person name="Honchak B.M."/>
            <person name="Karbach L.E."/>
            <person name="Kurdoglu A."/>
            <person name="Lahiri S."/>
            <person name="Mastrian S.D."/>
            <person name="Miyashita H."/>
            <person name="Page L."/>
            <person name="Ramakrishna P."/>
            <person name="Satoh S."/>
            <person name="Sattley W.M."/>
            <person name="Shimada Y."/>
            <person name="Taylor H.L."/>
            <person name="Tomo T."/>
            <person name="Tsuchiya T."/>
            <person name="Wang Z.T."/>
            <person name="Raymond J."/>
            <person name="Mimuro M."/>
            <person name="Blankenship R.E."/>
            <person name="Touchman J.W."/>
        </authorList>
    </citation>
    <scope>NUCLEOTIDE SEQUENCE [LARGE SCALE GENOMIC DNA]</scope>
    <source>
        <strain>MBIC 11017</strain>
    </source>
</reference>
<feature type="chain" id="PRO_1000079871" description="Large ribosomal subunit protein uL29">
    <location>
        <begin position="1"/>
        <end position="64"/>
    </location>
</feature>
<gene>
    <name evidence="1" type="primary">rpmC</name>
    <name evidence="1" type="synonym">rpl29</name>
    <name type="ordered locus">AM1_4704</name>
</gene>
<comment type="similarity">
    <text evidence="1">Belongs to the universal ribosomal protein uL29 family.</text>
</comment>
<protein>
    <recommendedName>
        <fullName evidence="1">Large ribosomal subunit protein uL29</fullName>
    </recommendedName>
    <alternativeName>
        <fullName evidence="2">50S ribosomal protein L29</fullName>
    </alternativeName>
</protein>